<gene>
    <name evidence="1" type="primary">rplS</name>
    <name type="ordered locus">CTA_0030</name>
</gene>
<dbReference type="EMBL" id="CP000051">
    <property type="protein sequence ID" value="AAX50278.1"/>
    <property type="molecule type" value="Genomic_DNA"/>
</dbReference>
<dbReference type="RefSeq" id="WP_009871375.1">
    <property type="nucleotide sequence ID" value="NC_007429.1"/>
</dbReference>
<dbReference type="SMR" id="Q3KMZ4"/>
<dbReference type="KEGG" id="cta:CTA_0030"/>
<dbReference type="HOGENOM" id="CLU_103507_2_1_0"/>
<dbReference type="Proteomes" id="UP000002532">
    <property type="component" value="Chromosome"/>
</dbReference>
<dbReference type="GO" id="GO:0022625">
    <property type="term" value="C:cytosolic large ribosomal subunit"/>
    <property type="evidence" value="ECO:0007669"/>
    <property type="project" value="TreeGrafter"/>
</dbReference>
<dbReference type="GO" id="GO:0003735">
    <property type="term" value="F:structural constituent of ribosome"/>
    <property type="evidence" value="ECO:0007669"/>
    <property type="project" value="InterPro"/>
</dbReference>
<dbReference type="GO" id="GO:0006412">
    <property type="term" value="P:translation"/>
    <property type="evidence" value="ECO:0007669"/>
    <property type="project" value="UniProtKB-UniRule"/>
</dbReference>
<dbReference type="FunFam" id="2.30.30.790:FF:000013">
    <property type="entry name" value="50S ribosomal protein L19"/>
    <property type="match status" value="1"/>
</dbReference>
<dbReference type="Gene3D" id="2.30.30.790">
    <property type="match status" value="1"/>
</dbReference>
<dbReference type="HAMAP" id="MF_00402">
    <property type="entry name" value="Ribosomal_bL19"/>
    <property type="match status" value="1"/>
</dbReference>
<dbReference type="InterPro" id="IPR001857">
    <property type="entry name" value="Ribosomal_bL19"/>
</dbReference>
<dbReference type="InterPro" id="IPR018257">
    <property type="entry name" value="Ribosomal_bL19_CS"/>
</dbReference>
<dbReference type="InterPro" id="IPR038657">
    <property type="entry name" value="Ribosomal_bL19_sf"/>
</dbReference>
<dbReference type="InterPro" id="IPR008991">
    <property type="entry name" value="Translation_prot_SH3-like_sf"/>
</dbReference>
<dbReference type="NCBIfam" id="TIGR01024">
    <property type="entry name" value="rplS_bact"/>
    <property type="match status" value="1"/>
</dbReference>
<dbReference type="PANTHER" id="PTHR15680:SF9">
    <property type="entry name" value="LARGE RIBOSOMAL SUBUNIT PROTEIN BL19M"/>
    <property type="match status" value="1"/>
</dbReference>
<dbReference type="PANTHER" id="PTHR15680">
    <property type="entry name" value="RIBOSOMAL PROTEIN L19"/>
    <property type="match status" value="1"/>
</dbReference>
<dbReference type="Pfam" id="PF01245">
    <property type="entry name" value="Ribosomal_L19"/>
    <property type="match status" value="1"/>
</dbReference>
<dbReference type="PIRSF" id="PIRSF002191">
    <property type="entry name" value="Ribosomal_L19"/>
    <property type="match status" value="1"/>
</dbReference>
<dbReference type="PRINTS" id="PR00061">
    <property type="entry name" value="RIBOSOMALL19"/>
</dbReference>
<dbReference type="SUPFAM" id="SSF50104">
    <property type="entry name" value="Translation proteins SH3-like domain"/>
    <property type="match status" value="1"/>
</dbReference>
<dbReference type="PROSITE" id="PS01015">
    <property type="entry name" value="RIBOSOMAL_L19"/>
    <property type="match status" value="1"/>
</dbReference>
<keyword id="KW-0687">Ribonucleoprotein</keyword>
<keyword id="KW-0689">Ribosomal protein</keyword>
<accession>Q3KMZ4</accession>
<evidence type="ECO:0000255" key="1">
    <source>
        <dbReference type="HAMAP-Rule" id="MF_00402"/>
    </source>
</evidence>
<evidence type="ECO:0000305" key="2"/>
<feature type="chain" id="PRO_0000226837" description="Large ribosomal subunit protein bL19">
    <location>
        <begin position="1"/>
        <end position="121"/>
    </location>
</feature>
<protein>
    <recommendedName>
        <fullName evidence="1">Large ribosomal subunit protein bL19</fullName>
    </recommendedName>
    <alternativeName>
        <fullName evidence="2">50S ribosomal protein L19</fullName>
    </alternativeName>
</protein>
<sequence>MGNLIKELQDEQCRTDLADFCVGDTIRVATNISEGGKERVQVFQGTVMARKGGGAGETVSLHRVAYGEGMEKSFLLNSPKIVSIEVVKRGKVSRARLFYLRGKTGKAAKVKELIGSRAAKK</sequence>
<comment type="function">
    <text evidence="1">This protein is located at the 30S-50S ribosomal subunit interface and may play a role in the structure and function of the aminoacyl-tRNA binding site.</text>
</comment>
<comment type="similarity">
    <text evidence="1">Belongs to the bacterial ribosomal protein bL19 family.</text>
</comment>
<reference key="1">
    <citation type="journal article" date="2005" name="Infect. Immun.">
        <title>Comparative genomic analysis of Chlamydia trachomatis oculotropic and genitotropic strains.</title>
        <authorList>
            <person name="Carlson J.H."/>
            <person name="Porcella S.F."/>
            <person name="McClarty G."/>
            <person name="Caldwell H.D."/>
        </authorList>
    </citation>
    <scope>NUCLEOTIDE SEQUENCE [LARGE SCALE GENOMIC DNA]</scope>
    <source>
        <strain>ATCC VR-571B / DSM 19440 / HAR-13</strain>
    </source>
</reference>
<organism>
    <name type="scientific">Chlamydia trachomatis serovar A (strain ATCC VR-571B / DSM 19440 / HAR-13)</name>
    <dbReference type="NCBI Taxonomy" id="315277"/>
    <lineage>
        <taxon>Bacteria</taxon>
        <taxon>Pseudomonadati</taxon>
        <taxon>Chlamydiota</taxon>
        <taxon>Chlamydiia</taxon>
        <taxon>Chlamydiales</taxon>
        <taxon>Chlamydiaceae</taxon>
        <taxon>Chlamydia/Chlamydophila group</taxon>
        <taxon>Chlamydia</taxon>
    </lineage>
</organism>
<proteinExistence type="inferred from homology"/>
<name>RL19_CHLTA</name>